<proteinExistence type="evidence at protein level"/>
<reference key="1">
    <citation type="submission" date="2000-12" db="EMBL/GenBank/DDBJ databases">
        <title>Characterization of a new serine acetyltransferase (SAT4) from Arabidopsis thaliana.</title>
        <authorList>
            <person name="Buisson S."/>
            <person name="Droux M."/>
        </authorList>
    </citation>
    <scope>NUCLEOTIDE SEQUENCE [GENOMIC DNA]</scope>
</reference>
<reference key="2">
    <citation type="journal article" date="1999" name="Nature">
        <title>Sequence and analysis of chromosome 4 of the plant Arabidopsis thaliana.</title>
        <authorList>
            <person name="Mayer K.F.X."/>
            <person name="Schueller C."/>
            <person name="Wambutt R."/>
            <person name="Murphy G."/>
            <person name="Volckaert G."/>
            <person name="Pohl T."/>
            <person name="Duesterhoeft A."/>
            <person name="Stiekema W."/>
            <person name="Entian K.-D."/>
            <person name="Terryn N."/>
            <person name="Harris B."/>
            <person name="Ansorge W."/>
            <person name="Brandt P."/>
            <person name="Grivell L.A."/>
            <person name="Rieger M."/>
            <person name="Weichselgartner M."/>
            <person name="de Simone V."/>
            <person name="Obermaier B."/>
            <person name="Mache R."/>
            <person name="Mueller M."/>
            <person name="Kreis M."/>
            <person name="Delseny M."/>
            <person name="Puigdomenech P."/>
            <person name="Watson M."/>
            <person name="Schmidtheini T."/>
            <person name="Reichert B."/>
            <person name="Portetelle D."/>
            <person name="Perez-Alonso M."/>
            <person name="Boutry M."/>
            <person name="Bancroft I."/>
            <person name="Vos P."/>
            <person name="Hoheisel J."/>
            <person name="Zimmermann W."/>
            <person name="Wedler H."/>
            <person name="Ridley P."/>
            <person name="Langham S.-A."/>
            <person name="McCullagh B."/>
            <person name="Bilham L."/>
            <person name="Robben J."/>
            <person name="van der Schueren J."/>
            <person name="Grymonprez B."/>
            <person name="Chuang Y.-J."/>
            <person name="Vandenbussche F."/>
            <person name="Braeken M."/>
            <person name="Weltjens I."/>
            <person name="Voet M."/>
            <person name="Bastiaens I."/>
            <person name="Aert R."/>
            <person name="Defoor E."/>
            <person name="Weitzenegger T."/>
            <person name="Bothe G."/>
            <person name="Ramsperger U."/>
            <person name="Hilbert H."/>
            <person name="Braun M."/>
            <person name="Holzer E."/>
            <person name="Brandt A."/>
            <person name="Peters S."/>
            <person name="van Staveren M."/>
            <person name="Dirkse W."/>
            <person name="Mooijman P."/>
            <person name="Klein Lankhorst R."/>
            <person name="Rose M."/>
            <person name="Hauf J."/>
            <person name="Koetter P."/>
            <person name="Berneiser S."/>
            <person name="Hempel S."/>
            <person name="Feldpausch M."/>
            <person name="Lamberth S."/>
            <person name="Van den Daele H."/>
            <person name="De Keyser A."/>
            <person name="Buysshaert C."/>
            <person name="Gielen J."/>
            <person name="Villarroel R."/>
            <person name="De Clercq R."/>
            <person name="van Montagu M."/>
            <person name="Rogers J."/>
            <person name="Cronin A."/>
            <person name="Quail M.A."/>
            <person name="Bray-Allen S."/>
            <person name="Clark L."/>
            <person name="Doggett J."/>
            <person name="Hall S."/>
            <person name="Kay M."/>
            <person name="Lennard N."/>
            <person name="McLay K."/>
            <person name="Mayes R."/>
            <person name="Pettett A."/>
            <person name="Rajandream M.A."/>
            <person name="Lyne M."/>
            <person name="Benes V."/>
            <person name="Rechmann S."/>
            <person name="Borkova D."/>
            <person name="Bloecker H."/>
            <person name="Scharfe M."/>
            <person name="Grimm M."/>
            <person name="Loehnert T.-H."/>
            <person name="Dose S."/>
            <person name="de Haan M."/>
            <person name="Maarse A.C."/>
            <person name="Schaefer M."/>
            <person name="Mueller-Auer S."/>
            <person name="Gabel C."/>
            <person name="Fuchs M."/>
            <person name="Fartmann B."/>
            <person name="Granderath K."/>
            <person name="Dauner D."/>
            <person name="Herzl A."/>
            <person name="Neumann S."/>
            <person name="Argiriou A."/>
            <person name="Vitale D."/>
            <person name="Liguori R."/>
            <person name="Piravandi E."/>
            <person name="Massenet O."/>
            <person name="Quigley F."/>
            <person name="Clabauld G."/>
            <person name="Muendlein A."/>
            <person name="Felber R."/>
            <person name="Schnabl S."/>
            <person name="Hiller R."/>
            <person name="Schmidt W."/>
            <person name="Lecharny A."/>
            <person name="Aubourg S."/>
            <person name="Chefdor F."/>
            <person name="Cooke R."/>
            <person name="Berger C."/>
            <person name="Monfort A."/>
            <person name="Casacuberta E."/>
            <person name="Gibbons T."/>
            <person name="Weber N."/>
            <person name="Vandenbol M."/>
            <person name="Bargues M."/>
            <person name="Terol J."/>
            <person name="Torres A."/>
            <person name="Perez-Perez A."/>
            <person name="Purnelle B."/>
            <person name="Bent E."/>
            <person name="Johnson S."/>
            <person name="Tacon D."/>
            <person name="Jesse T."/>
            <person name="Heijnen L."/>
            <person name="Schwarz S."/>
            <person name="Scholler P."/>
            <person name="Heber S."/>
            <person name="Francs P."/>
            <person name="Bielke C."/>
            <person name="Frishman D."/>
            <person name="Haase D."/>
            <person name="Lemcke K."/>
            <person name="Mewes H.-W."/>
            <person name="Stocker S."/>
            <person name="Zaccaria P."/>
            <person name="Bevan M."/>
            <person name="Wilson R.K."/>
            <person name="de la Bastide M."/>
            <person name="Habermann K."/>
            <person name="Parnell L."/>
            <person name="Dedhia N."/>
            <person name="Gnoj L."/>
            <person name="Schutz K."/>
            <person name="Huang E."/>
            <person name="Spiegel L."/>
            <person name="Sekhon M."/>
            <person name="Murray J."/>
            <person name="Sheet P."/>
            <person name="Cordes M."/>
            <person name="Abu-Threideh J."/>
            <person name="Stoneking T."/>
            <person name="Kalicki J."/>
            <person name="Graves T."/>
            <person name="Harmon G."/>
            <person name="Edwards J."/>
            <person name="Latreille P."/>
            <person name="Courtney L."/>
            <person name="Cloud J."/>
            <person name="Abbott A."/>
            <person name="Scott K."/>
            <person name="Johnson D."/>
            <person name="Minx P."/>
            <person name="Bentley D."/>
            <person name="Fulton B."/>
            <person name="Miller N."/>
            <person name="Greco T."/>
            <person name="Kemp K."/>
            <person name="Kramer J."/>
            <person name="Fulton L."/>
            <person name="Mardis E."/>
            <person name="Dante M."/>
            <person name="Pepin K."/>
            <person name="Hillier L.W."/>
            <person name="Nelson J."/>
            <person name="Spieth J."/>
            <person name="Ryan E."/>
            <person name="Andrews S."/>
            <person name="Geisel C."/>
            <person name="Layman D."/>
            <person name="Du H."/>
            <person name="Ali J."/>
            <person name="Berghoff A."/>
            <person name="Jones K."/>
            <person name="Drone K."/>
            <person name="Cotton M."/>
            <person name="Joshu C."/>
            <person name="Antonoiu B."/>
            <person name="Zidanic M."/>
            <person name="Strong C."/>
            <person name="Sun H."/>
            <person name="Lamar B."/>
            <person name="Yordan C."/>
            <person name="Ma P."/>
            <person name="Zhong J."/>
            <person name="Preston R."/>
            <person name="Vil D."/>
            <person name="Shekher M."/>
            <person name="Matero A."/>
            <person name="Shah R."/>
            <person name="Swaby I.K."/>
            <person name="O'Shaughnessy A."/>
            <person name="Rodriguez M."/>
            <person name="Hoffman J."/>
            <person name="Till S."/>
            <person name="Granat S."/>
            <person name="Shohdy N."/>
            <person name="Hasegawa A."/>
            <person name="Hameed A."/>
            <person name="Lodhi M."/>
            <person name="Johnson A."/>
            <person name="Chen E."/>
            <person name="Marra M.A."/>
            <person name="Martienssen R."/>
            <person name="McCombie W.R."/>
        </authorList>
    </citation>
    <scope>NUCLEOTIDE SEQUENCE [LARGE SCALE GENOMIC DNA]</scope>
    <source>
        <strain>cv. Columbia</strain>
    </source>
</reference>
<reference key="3">
    <citation type="journal article" date="2017" name="Plant J.">
        <title>Araport11: a complete reannotation of the Arabidopsis thaliana reference genome.</title>
        <authorList>
            <person name="Cheng C.Y."/>
            <person name="Krishnakumar V."/>
            <person name="Chan A.P."/>
            <person name="Thibaud-Nissen F."/>
            <person name="Schobel S."/>
            <person name="Town C.D."/>
        </authorList>
    </citation>
    <scope>GENOME REANNOTATION</scope>
    <source>
        <strain>cv. Columbia</strain>
    </source>
</reference>
<reference key="4">
    <citation type="journal article" date="2003" name="Science">
        <title>Empirical analysis of transcriptional activity in the Arabidopsis genome.</title>
        <authorList>
            <person name="Yamada K."/>
            <person name="Lim J."/>
            <person name="Dale J.M."/>
            <person name="Chen H."/>
            <person name="Shinn P."/>
            <person name="Palm C.J."/>
            <person name="Southwick A.M."/>
            <person name="Wu H.C."/>
            <person name="Kim C.J."/>
            <person name="Nguyen M."/>
            <person name="Pham P.K."/>
            <person name="Cheuk R.F."/>
            <person name="Karlin-Newmann G."/>
            <person name="Liu S.X."/>
            <person name="Lam B."/>
            <person name="Sakano H."/>
            <person name="Wu T."/>
            <person name="Yu G."/>
            <person name="Miranda M."/>
            <person name="Quach H.L."/>
            <person name="Tripp M."/>
            <person name="Chang C.H."/>
            <person name="Lee J.M."/>
            <person name="Toriumi M.J."/>
            <person name="Chan M.M."/>
            <person name="Tang C.C."/>
            <person name="Onodera C.S."/>
            <person name="Deng J.M."/>
            <person name="Akiyama K."/>
            <person name="Ansari Y."/>
            <person name="Arakawa T."/>
            <person name="Banh J."/>
            <person name="Banno F."/>
            <person name="Bowser L."/>
            <person name="Brooks S.Y."/>
            <person name="Carninci P."/>
            <person name="Chao Q."/>
            <person name="Choy N."/>
            <person name="Enju A."/>
            <person name="Goldsmith A.D."/>
            <person name="Gurjal M."/>
            <person name="Hansen N.F."/>
            <person name="Hayashizaki Y."/>
            <person name="Johnson-Hopson C."/>
            <person name="Hsuan V.W."/>
            <person name="Iida K."/>
            <person name="Karnes M."/>
            <person name="Khan S."/>
            <person name="Koesema E."/>
            <person name="Ishida J."/>
            <person name="Jiang P.X."/>
            <person name="Jones T."/>
            <person name="Kawai J."/>
            <person name="Kamiya A."/>
            <person name="Meyers C."/>
            <person name="Nakajima M."/>
            <person name="Narusaka M."/>
            <person name="Seki M."/>
            <person name="Sakurai T."/>
            <person name="Satou M."/>
            <person name="Tamse R."/>
            <person name="Vaysberg M."/>
            <person name="Wallender E.K."/>
            <person name="Wong C."/>
            <person name="Yamamura Y."/>
            <person name="Yuan S."/>
            <person name="Shinozaki K."/>
            <person name="Davis R.W."/>
            <person name="Theologis A."/>
            <person name="Ecker J.R."/>
        </authorList>
    </citation>
    <scope>NUCLEOTIDE SEQUENCE [LARGE SCALE MRNA]</scope>
    <source>
        <strain>cv. Columbia</strain>
    </source>
</reference>
<reference key="5">
    <citation type="journal article" date="2005" name="Plant Physiol.">
        <title>Characterization and expression analysis of a serine acetyltransferase gene family involved in a key step of the sulfur assimilation pathway in Arabidopsis.</title>
        <authorList>
            <person name="Kawashima C.G."/>
            <person name="Berkowitz O."/>
            <person name="Hell R."/>
            <person name="Noji M."/>
            <person name="Saito K."/>
        </authorList>
    </citation>
    <scope>ACTIVITY REGULATION</scope>
    <scope>BIOPHYSICOCHEMICAL PROPERTIES</scope>
    <scope>CATALYTIC ACTIVITY</scope>
    <scope>PATHWAY</scope>
    <scope>SUBCELLULAR LOCATION</scope>
    <scope>TISSUE SPECIFICITY</scope>
    <scope>INDUCTION</scope>
    <scope>GENE FAMILY</scope>
    <scope>NOMENCLATURE</scope>
</reference>
<accession>Q8W2B8</accession>
<accession>O81795</accession>
<gene>
    <name evidence="4" type="primary">SAT4</name>
    <name evidence="6" type="ordered locus">At4g35640</name>
    <name evidence="7" type="ORF">F8D20.150</name>
</gene>
<comment type="catalytic activity">
    <reaction evidence="2">
        <text>L-serine + acetyl-CoA = O-acetyl-L-serine + CoA</text>
        <dbReference type="Rhea" id="RHEA:24560"/>
        <dbReference type="ChEBI" id="CHEBI:33384"/>
        <dbReference type="ChEBI" id="CHEBI:57287"/>
        <dbReference type="ChEBI" id="CHEBI:57288"/>
        <dbReference type="ChEBI" id="CHEBI:58340"/>
        <dbReference type="EC" id="2.3.1.30"/>
    </reaction>
</comment>
<comment type="activity regulation">
    <text evidence="2">Feedback inhibitions by L-Ser and acetyl-CoA.</text>
</comment>
<comment type="biophysicochemical properties">
    <kinetics>
        <KM evidence="2">39.5 mM for L-Ser (at pH 8 and 30 degrees Celsius)</KM>
        <KM evidence="2">45.1 mM for acetyl-CoA (at pH 8 and 30 degrees Celsius)</KM>
    </kinetics>
</comment>
<comment type="pathway">
    <text evidence="2">Amino-acid biosynthesis; L-cysteine biosynthesis; L-cysteine from L-serine: step 1/2.</text>
</comment>
<comment type="subunit">
    <text evidence="1">Homomultimer.</text>
</comment>
<comment type="subcellular location">
    <subcellularLocation>
        <location evidence="2">Cytoplasm</location>
    </subcellularLocation>
</comment>
<comment type="tissue specificity">
    <text evidence="2">Localized in vascular tissues, particularly in phloem.</text>
</comment>
<comment type="induction">
    <text evidence="2">By cadmium (Cd). Induced in roots and shoots under sulfur-deficient conditions.</text>
</comment>
<comment type="similarity">
    <text evidence="5">Belongs to the transferase hexapeptide repeat family.</text>
</comment>
<comment type="sequence caution" evidence="5">
    <conflict type="erroneous gene model prediction">
        <sequence resource="EMBL-CDS" id="CAA20034"/>
    </conflict>
</comment>
<comment type="sequence caution" evidence="5">
    <conflict type="erroneous gene model prediction">
        <sequence resource="EMBL-CDS" id="CAB80280"/>
    </conflict>
</comment>
<sequence>MACINGENRDFSSSSSLSSLPMIVSRNFSARDDGETGDEFPFERIFPVYARGTLNPVADPVLLDFTNSSYDPIWDSIREEAKLEAEEEPVLSSFLYASILSHDCLEQALSFVLANRLQNPTLLATQLMDIFCNVMVHDRGIQSSIRLDVQAFKDRDPACLSYSSAILHLKGYLALQAYRVAHKLWKQGRKLLALALQSRVSEVFGIDIHPAARIGKGILLDHGTGVVIGETAVIGDRVSILHGVTLGGTGKETGDRHPNIGDGALLGACVTILGNIKIGAGAMVAAGSLVLKDVPSHSMVAGNPAKLIGFVDEQDPSMTMEHDATREFFQNVAVAYRETIPNGSSVSGSCRERRH</sequence>
<name>SAT4_ARATH</name>
<feature type="chain" id="PRO_0000068692" description="Serine acetyltransferase 4">
    <location>
        <begin position="1"/>
        <end position="355"/>
    </location>
</feature>
<protein>
    <recommendedName>
        <fullName evidence="4">Serine acetyltransferase 4</fullName>
        <shortName evidence="4">AtSAT-4</shortName>
        <shortName evidence="3">AtSERAT3;2</shortName>
        <ecNumber evidence="2">2.3.1.30</ecNumber>
    </recommendedName>
</protein>
<organism>
    <name type="scientific">Arabidopsis thaliana</name>
    <name type="common">Mouse-ear cress</name>
    <dbReference type="NCBI Taxonomy" id="3702"/>
    <lineage>
        <taxon>Eukaryota</taxon>
        <taxon>Viridiplantae</taxon>
        <taxon>Streptophyta</taxon>
        <taxon>Embryophyta</taxon>
        <taxon>Tracheophyta</taxon>
        <taxon>Spermatophyta</taxon>
        <taxon>Magnoliopsida</taxon>
        <taxon>eudicotyledons</taxon>
        <taxon>Gunneridae</taxon>
        <taxon>Pentapetalae</taxon>
        <taxon>rosids</taxon>
        <taxon>malvids</taxon>
        <taxon>Brassicales</taxon>
        <taxon>Brassicaceae</taxon>
        <taxon>Camelineae</taxon>
        <taxon>Arabidopsis</taxon>
    </lineage>
</organism>
<evidence type="ECO:0000250" key="1"/>
<evidence type="ECO:0000269" key="2">
    <source>
    </source>
</evidence>
<evidence type="ECO:0000303" key="3">
    <source>
    </source>
</evidence>
<evidence type="ECO:0000303" key="4">
    <source ref="1"/>
</evidence>
<evidence type="ECO:0000305" key="5"/>
<evidence type="ECO:0000312" key="6">
    <source>
        <dbReference type="Araport" id="AT4G35640"/>
    </source>
</evidence>
<evidence type="ECO:0000312" key="7">
    <source>
        <dbReference type="EMBL" id="CAA20034.1"/>
    </source>
</evidence>
<dbReference type="EC" id="2.3.1.30" evidence="2"/>
<dbReference type="EMBL" id="AF331847">
    <property type="protein sequence ID" value="AAL37489.1"/>
    <property type="molecule type" value="Genomic_DNA"/>
</dbReference>
<dbReference type="EMBL" id="AL031135">
    <property type="protein sequence ID" value="CAA20034.1"/>
    <property type="status" value="ALT_SEQ"/>
    <property type="molecule type" value="Genomic_DNA"/>
</dbReference>
<dbReference type="EMBL" id="AL161587">
    <property type="protein sequence ID" value="CAB80280.1"/>
    <property type="status" value="ALT_SEQ"/>
    <property type="molecule type" value="Genomic_DNA"/>
</dbReference>
<dbReference type="EMBL" id="CP002687">
    <property type="protein sequence ID" value="AEE86543.1"/>
    <property type="molecule type" value="Genomic_DNA"/>
</dbReference>
<dbReference type="EMBL" id="BT004080">
    <property type="protein sequence ID" value="AAO42107.1"/>
    <property type="molecule type" value="mRNA"/>
</dbReference>
<dbReference type="EMBL" id="BT005047">
    <property type="protein sequence ID" value="AAO50580.1"/>
    <property type="molecule type" value="mRNA"/>
</dbReference>
<dbReference type="PIR" id="T04669">
    <property type="entry name" value="T04669"/>
</dbReference>
<dbReference type="RefSeq" id="NP_195289.3">
    <property type="nucleotide sequence ID" value="NM_119729.4"/>
</dbReference>
<dbReference type="SMR" id="Q8W2B8"/>
<dbReference type="BioGRID" id="14998">
    <property type="interactions" value="2"/>
</dbReference>
<dbReference type="FunCoup" id="Q8W2B8">
    <property type="interactions" value="472"/>
</dbReference>
<dbReference type="STRING" id="3702.Q8W2B8"/>
<dbReference type="iPTMnet" id="Q8W2B8"/>
<dbReference type="PaxDb" id="3702-AT4G35640.1"/>
<dbReference type="ProteomicsDB" id="226688"/>
<dbReference type="EnsemblPlants" id="AT4G35640.1">
    <property type="protein sequence ID" value="AT4G35640.1"/>
    <property type="gene ID" value="AT4G35640"/>
</dbReference>
<dbReference type="GeneID" id="829716"/>
<dbReference type="Gramene" id="AT4G35640.1">
    <property type="protein sequence ID" value="AT4G35640.1"/>
    <property type="gene ID" value="AT4G35640"/>
</dbReference>
<dbReference type="KEGG" id="ath:AT4G35640"/>
<dbReference type="Araport" id="AT4G35640"/>
<dbReference type="TAIR" id="AT4G35640">
    <property type="gene designation" value="SERAT3"/>
</dbReference>
<dbReference type="eggNOG" id="KOG4750">
    <property type="taxonomic scope" value="Eukaryota"/>
</dbReference>
<dbReference type="HOGENOM" id="CLU_051638_0_0_1"/>
<dbReference type="InParanoid" id="Q8W2B8"/>
<dbReference type="OMA" id="MIVSRNF"/>
<dbReference type="PhylomeDB" id="Q8W2B8"/>
<dbReference type="BRENDA" id="2.3.1.30">
    <property type="organism ID" value="399"/>
</dbReference>
<dbReference type="SABIO-RK" id="Q8W2B8"/>
<dbReference type="UniPathway" id="UPA00136">
    <property type="reaction ID" value="UER00199"/>
</dbReference>
<dbReference type="PRO" id="PR:Q8W2B8"/>
<dbReference type="Proteomes" id="UP000006548">
    <property type="component" value="Chromosome 4"/>
</dbReference>
<dbReference type="ExpressionAtlas" id="Q8W2B8">
    <property type="expression patterns" value="baseline and differential"/>
</dbReference>
<dbReference type="GO" id="GO:0005829">
    <property type="term" value="C:cytosol"/>
    <property type="evidence" value="ECO:0000314"/>
    <property type="project" value="TAIR"/>
</dbReference>
<dbReference type="GO" id="GO:0009001">
    <property type="term" value="F:serine O-acetyltransferase activity"/>
    <property type="evidence" value="ECO:0000314"/>
    <property type="project" value="TAIR"/>
</dbReference>
<dbReference type="GO" id="GO:0006535">
    <property type="term" value="P:cysteine biosynthetic process from serine"/>
    <property type="evidence" value="ECO:0007669"/>
    <property type="project" value="InterPro"/>
</dbReference>
<dbReference type="GO" id="GO:0000103">
    <property type="term" value="P:sulfate assimilation"/>
    <property type="evidence" value="ECO:0000304"/>
    <property type="project" value="TAIR"/>
</dbReference>
<dbReference type="CDD" id="cd03354">
    <property type="entry name" value="LbH_SAT"/>
    <property type="match status" value="1"/>
</dbReference>
<dbReference type="FunFam" id="2.160.10.10:FF:000002">
    <property type="entry name" value="Serine acetyltransferase"/>
    <property type="match status" value="1"/>
</dbReference>
<dbReference type="FunFam" id="1.10.3130.10:FF:000005">
    <property type="entry name" value="Serine acetyltransferase 4"/>
    <property type="match status" value="1"/>
</dbReference>
<dbReference type="Gene3D" id="2.160.10.10">
    <property type="entry name" value="Hexapeptide repeat proteins"/>
    <property type="match status" value="1"/>
</dbReference>
<dbReference type="Gene3D" id="1.10.3130.10">
    <property type="entry name" value="serine acetyltransferase, domain 1"/>
    <property type="match status" value="1"/>
</dbReference>
<dbReference type="InterPro" id="IPR001451">
    <property type="entry name" value="Hexapep"/>
</dbReference>
<dbReference type="InterPro" id="IPR018357">
    <property type="entry name" value="Hexapep_transf_CS"/>
</dbReference>
<dbReference type="InterPro" id="IPR045304">
    <property type="entry name" value="LbH_SAT"/>
</dbReference>
<dbReference type="InterPro" id="IPR010493">
    <property type="entry name" value="Ser_AcTrfase_N"/>
</dbReference>
<dbReference type="InterPro" id="IPR042122">
    <property type="entry name" value="Ser_AcTrfase_N_sf"/>
</dbReference>
<dbReference type="InterPro" id="IPR005881">
    <property type="entry name" value="Ser_O-AcTrfase"/>
</dbReference>
<dbReference type="InterPro" id="IPR053376">
    <property type="entry name" value="Serine_acetyltransferase"/>
</dbReference>
<dbReference type="InterPro" id="IPR011004">
    <property type="entry name" value="Trimer_LpxA-like_sf"/>
</dbReference>
<dbReference type="NCBIfam" id="TIGR01172">
    <property type="entry name" value="cysE"/>
    <property type="match status" value="1"/>
</dbReference>
<dbReference type="NCBIfam" id="NF041874">
    <property type="entry name" value="EPS_EpsC"/>
    <property type="match status" value="1"/>
</dbReference>
<dbReference type="PANTHER" id="PTHR42811">
    <property type="entry name" value="SERINE ACETYLTRANSFERASE"/>
    <property type="match status" value="1"/>
</dbReference>
<dbReference type="Pfam" id="PF00132">
    <property type="entry name" value="Hexapep"/>
    <property type="match status" value="1"/>
</dbReference>
<dbReference type="Pfam" id="PF06426">
    <property type="entry name" value="SATase_N"/>
    <property type="match status" value="1"/>
</dbReference>
<dbReference type="SMART" id="SM00971">
    <property type="entry name" value="SATase_N"/>
    <property type="match status" value="1"/>
</dbReference>
<dbReference type="SUPFAM" id="SSF51161">
    <property type="entry name" value="Trimeric LpxA-like enzymes"/>
    <property type="match status" value="1"/>
</dbReference>
<dbReference type="PROSITE" id="PS00101">
    <property type="entry name" value="HEXAPEP_TRANSFERASES"/>
    <property type="match status" value="1"/>
</dbReference>
<keyword id="KW-0012">Acyltransferase</keyword>
<keyword id="KW-0028">Amino-acid biosynthesis</keyword>
<keyword id="KW-0963">Cytoplasm</keyword>
<keyword id="KW-1185">Reference proteome</keyword>
<keyword id="KW-0808">Transferase</keyword>